<organism>
    <name type="scientific">Sinorhizobium fredii (strain NBRC 101917 / NGR234)</name>
    <dbReference type="NCBI Taxonomy" id="394"/>
    <lineage>
        <taxon>Bacteria</taxon>
        <taxon>Pseudomonadati</taxon>
        <taxon>Pseudomonadota</taxon>
        <taxon>Alphaproteobacteria</taxon>
        <taxon>Hyphomicrobiales</taxon>
        <taxon>Rhizobiaceae</taxon>
        <taxon>Sinorhizobium/Ensifer group</taxon>
        <taxon>Sinorhizobium</taxon>
    </lineage>
</organism>
<gene>
    <name type="ordered locus">NGR_a02600</name>
    <name type="ORF">y4lR</name>
</gene>
<protein>
    <recommendedName>
        <fullName>Uncharacterized protein y4lR</fullName>
    </recommendedName>
</protein>
<dbReference type="EMBL" id="U00090">
    <property type="protein sequence ID" value="AAB92460.1"/>
    <property type="molecule type" value="Genomic_DNA"/>
</dbReference>
<dbReference type="RefSeq" id="NP_443965.1">
    <property type="nucleotide sequence ID" value="NC_000914.2"/>
</dbReference>
<dbReference type="RefSeq" id="WP_010875285.1">
    <property type="nucleotide sequence ID" value="NC_000914.2"/>
</dbReference>
<dbReference type="KEGG" id="rhi:NGR_a02600"/>
<dbReference type="PATRIC" id="fig|394.7.peg.275"/>
<dbReference type="eggNOG" id="COG3318">
    <property type="taxonomic scope" value="Bacteria"/>
</dbReference>
<dbReference type="HOGENOM" id="CLU_521635_0_0_5"/>
<dbReference type="OrthoDB" id="7647056at2"/>
<dbReference type="Proteomes" id="UP000001054">
    <property type="component" value="Plasmid pNGR234a"/>
</dbReference>
<keyword id="KW-0614">Plasmid</keyword>
<keyword id="KW-1185">Reference proteome</keyword>
<sequence length="522" mass="56794">MVKIAEACLNVLYQHGLSSAQFQFWFERAKHDLLADGMACDAIVAEVMQSMDDHPDAATLFGLLLDEARMGIENDSPYGKAFLENAEKAIRARIAADAFEPLHRLKIAGLYRRAGLPVPDILMLDPEGEGAADEIAMPDLGGVLAVLAAEVEAEGGGAYEFFSGLDEMTAGMPEGAKAGFIHHLMSLDNPFLERCALYWLVSGAALTREAVADGLRERLMRGELQPETASYLPIIRGWLPASAARAAIDDIGKLSRRQGLADASNQNRAEPIVSDIMATTADGVGAQGLTIVGKLQARTFVAMILLKTGYGIKDAFVIRCRSKSEATNIVSYARQEANSVKIDRMTAELLLEAALADGMKNGHPPAPGFIDVIEACSLSQLRPQERDLQALLEHVDPQKEIQNATAAELNRMLRNASALDALVPFTDSWFEDTGETRGIIQGSRSVRTVEKRIWAFLEGRRDIWARRFLQTAIILKSAKKERMSKALAAAAFAVMHKHPLQDIPLMKDIAMTTLDAGGGSPW</sequence>
<name>Y4LR_SINFN</name>
<accession>P55558</accession>
<geneLocation type="plasmid">
    <name>sym pNGR234a</name>
</geneLocation>
<proteinExistence type="predicted"/>
<feature type="chain" id="PRO_0000200909" description="Uncharacterized protein y4lR">
    <location>
        <begin position="1"/>
        <end position="522"/>
    </location>
</feature>
<reference key="1">
    <citation type="journal article" date="1997" name="Nature">
        <title>Molecular basis of symbiosis between Rhizobium and legumes.</title>
        <authorList>
            <person name="Freiberg C.A."/>
            <person name="Fellay R."/>
            <person name="Bairoch A."/>
            <person name="Broughton W.J."/>
            <person name="Rosenthal A."/>
            <person name="Perret X."/>
        </authorList>
    </citation>
    <scope>NUCLEOTIDE SEQUENCE [LARGE SCALE GENOMIC DNA]</scope>
    <source>
        <strain>NBRC 101917 / NGR234</strain>
    </source>
</reference>
<reference key="2">
    <citation type="journal article" date="2009" name="Appl. Environ. Microbiol.">
        <title>Rhizobium sp. strain NGR234 possesses a remarkable number of secretion systems.</title>
        <authorList>
            <person name="Schmeisser C."/>
            <person name="Liesegang H."/>
            <person name="Krysciak D."/>
            <person name="Bakkou N."/>
            <person name="Le Quere A."/>
            <person name="Wollherr A."/>
            <person name="Heinemeyer I."/>
            <person name="Morgenstern B."/>
            <person name="Pommerening-Roeser A."/>
            <person name="Flores M."/>
            <person name="Palacios R."/>
            <person name="Brenner S."/>
            <person name="Gottschalk G."/>
            <person name="Schmitz R.A."/>
            <person name="Broughton W.J."/>
            <person name="Perret X."/>
            <person name="Strittmatter A.W."/>
            <person name="Streit W.R."/>
        </authorList>
    </citation>
    <scope>NUCLEOTIDE SEQUENCE [LARGE SCALE GENOMIC DNA]</scope>
    <source>
        <strain>NBRC 101917 / NGR234</strain>
    </source>
</reference>